<organism evidence="7">
    <name type="scientific">Arabidopsis thaliana</name>
    <name type="common">Mouse-ear cress</name>
    <dbReference type="NCBI Taxonomy" id="3702"/>
    <lineage>
        <taxon>Eukaryota</taxon>
        <taxon>Viridiplantae</taxon>
        <taxon>Streptophyta</taxon>
        <taxon>Embryophyta</taxon>
        <taxon>Tracheophyta</taxon>
        <taxon>Spermatophyta</taxon>
        <taxon>Magnoliopsida</taxon>
        <taxon>eudicotyledons</taxon>
        <taxon>Gunneridae</taxon>
        <taxon>Pentapetalae</taxon>
        <taxon>rosids</taxon>
        <taxon>malvids</taxon>
        <taxon>Brassicales</taxon>
        <taxon>Brassicaceae</taxon>
        <taxon>Camelineae</taxon>
        <taxon>Arabidopsis</taxon>
    </lineage>
</organism>
<keyword id="KW-0007">Acetylation</keyword>
<keyword id="KW-0479">Metal-binding</keyword>
<keyword id="KW-0507">mRNA processing</keyword>
<keyword id="KW-0508">mRNA splicing</keyword>
<keyword id="KW-0539">Nucleus</keyword>
<keyword id="KW-0597">Phosphoprotein</keyword>
<keyword id="KW-1185">Reference proteome</keyword>
<keyword id="KW-0747">Spliceosome</keyword>
<keyword id="KW-0862">Zinc</keyword>
<keyword id="KW-0863">Zinc-finger</keyword>
<feature type="initiator methionine" description="Removed" evidence="10">
    <location>
        <position position="1"/>
    </location>
</feature>
<feature type="chain" id="PRO_0000436559" description="Splicing factor SF3a60 homolog">
    <location>
        <begin position="2"/>
        <end position="504"/>
    </location>
</feature>
<feature type="zinc finger region" description="Matrin-type" evidence="1">
    <location>
        <begin position="409"/>
        <end position="440"/>
    </location>
</feature>
<feature type="region of interest" description="Disordered" evidence="2">
    <location>
        <begin position="293"/>
        <end position="319"/>
    </location>
</feature>
<feature type="region of interest" description="Disordered" evidence="2">
    <location>
        <begin position="355"/>
        <end position="374"/>
    </location>
</feature>
<feature type="compositionally biased region" description="Acidic residues" evidence="2">
    <location>
        <begin position="356"/>
        <end position="374"/>
    </location>
</feature>
<feature type="modified residue" description="N-acetylserine" evidence="10">
    <location>
        <position position="2"/>
    </location>
</feature>
<feature type="modified residue" description="Phosphoserine" evidence="8 9">
    <location>
        <position position="373"/>
    </location>
</feature>
<feature type="mutagenesis site" description="In ato; gametophytic lethality." evidence="3">
    <original>C</original>
    <variation>Y</variation>
    <location>
        <position position="411"/>
    </location>
</feature>
<sequence>MSSTLLEQTRSNHEEVERLERLVVEDLQKEPPSSKDRLVQGHRVRHMIESIMLTTEKLVETYEDKDGAWDDEIAALGGQTATGTNVFSEFYDRLKEIREYHKRHPSGRLVDANEDYEARLKEEPIIAFSGEEGNGRYLDLHDMYNQYINSKFGERVEYSAYLDVFSQPEKIPRKLKLSRQYMKYMEALLEYLVYFFQRTEPLQDLDRILSKVCSDFEEQYADGIVEGLDNELIPSQHTVIDLDYYSTVEELVDVGPEKLKEALGALGLKVGGTPQQRAERLFLTKHTPLEKLDKKHFARPPHNGKQNGDAKSTHESENAKEIALTEAKVKKLCNLLDETIERTKQNIVKKQSLTYEEMEGEREGEEANTELESDDEDGLIYNPLKLPIGWDGKPIPYWLYKLHGLGQEFKCEICGNYSYWGRRAFERHFKEWRHQHGMRCLGIPNTKNFNEITSIEEAKELWKRIQERQGVNKWRPELEEEYEDREGNIYNKKTYSDLQRQGLI</sequence>
<name>ATO_ARATH</name>
<protein>
    <recommendedName>
        <fullName evidence="5">Splicing factor SF3a60 homolog</fullName>
    </recommendedName>
    <alternativeName>
        <fullName evidence="4">Protein ATROPOS</fullName>
    </alternativeName>
    <alternativeName>
        <fullName evidence="5">Splicing factor ATO</fullName>
    </alternativeName>
</protein>
<dbReference type="EMBL" id="AP002544">
    <property type="protein sequence ID" value="BAB09681.1"/>
    <property type="molecule type" value="Genomic_DNA"/>
</dbReference>
<dbReference type="EMBL" id="CP002688">
    <property type="protein sequence ID" value="AED90977.1"/>
    <property type="molecule type" value="Genomic_DNA"/>
</dbReference>
<dbReference type="EMBL" id="AY039944">
    <property type="protein sequence ID" value="AAK64048.1"/>
    <property type="molecule type" value="mRNA"/>
</dbReference>
<dbReference type="EMBL" id="AY113862">
    <property type="protein sequence ID" value="AAM44910.1"/>
    <property type="molecule type" value="mRNA"/>
</dbReference>
<dbReference type="RefSeq" id="NP_196234.3">
    <property type="nucleotide sequence ID" value="NM_120698.5"/>
</dbReference>
<dbReference type="SMR" id="Q9FG01"/>
<dbReference type="FunCoup" id="Q9FG01">
    <property type="interactions" value="5321"/>
</dbReference>
<dbReference type="IntAct" id="Q9FG01">
    <property type="interactions" value="52"/>
</dbReference>
<dbReference type="MINT" id="Q9FG01"/>
<dbReference type="STRING" id="3702.Q9FG01"/>
<dbReference type="GlyGen" id="Q9FG01">
    <property type="glycosylation" value="1 site"/>
</dbReference>
<dbReference type="iPTMnet" id="Q9FG01"/>
<dbReference type="PaxDb" id="3702-AT5G06160.1"/>
<dbReference type="ProteomicsDB" id="246655"/>
<dbReference type="EnsemblPlants" id="AT5G06160.1">
    <property type="protein sequence ID" value="AT5G06160.1"/>
    <property type="gene ID" value="AT5G06160"/>
</dbReference>
<dbReference type="GeneID" id="830503"/>
<dbReference type="Gramene" id="AT5G06160.1">
    <property type="protein sequence ID" value="AT5G06160.1"/>
    <property type="gene ID" value="AT5G06160"/>
</dbReference>
<dbReference type="KEGG" id="ath:AT5G06160"/>
<dbReference type="Araport" id="AT5G06160"/>
<dbReference type="TAIR" id="AT5G06160">
    <property type="gene designation" value="ATO"/>
</dbReference>
<dbReference type="eggNOG" id="KOG2636">
    <property type="taxonomic scope" value="Eukaryota"/>
</dbReference>
<dbReference type="HOGENOM" id="CLU_027160_2_0_1"/>
<dbReference type="InParanoid" id="Q9FG01"/>
<dbReference type="OMA" id="GPKAFQK"/>
<dbReference type="PhylomeDB" id="Q9FG01"/>
<dbReference type="CD-CODE" id="4299E36E">
    <property type="entry name" value="Nucleolus"/>
</dbReference>
<dbReference type="PRO" id="PR:Q9FG01"/>
<dbReference type="Proteomes" id="UP000006548">
    <property type="component" value="Chromosome 5"/>
</dbReference>
<dbReference type="ExpressionAtlas" id="Q9FG01">
    <property type="expression patterns" value="baseline and differential"/>
</dbReference>
<dbReference type="GO" id="GO:0005681">
    <property type="term" value="C:spliceosomal complex"/>
    <property type="evidence" value="ECO:0007669"/>
    <property type="project" value="UniProtKB-KW"/>
</dbReference>
<dbReference type="GO" id="GO:0003723">
    <property type="term" value="F:RNA binding"/>
    <property type="evidence" value="ECO:0007669"/>
    <property type="project" value="InterPro"/>
</dbReference>
<dbReference type="GO" id="GO:0008270">
    <property type="term" value="F:zinc ion binding"/>
    <property type="evidence" value="ECO:0007669"/>
    <property type="project" value="UniProtKB-KW"/>
</dbReference>
<dbReference type="GO" id="GO:0000398">
    <property type="term" value="P:mRNA splicing, via spliceosome"/>
    <property type="evidence" value="ECO:0007669"/>
    <property type="project" value="InterPro"/>
</dbReference>
<dbReference type="GO" id="GO:0045694">
    <property type="term" value="P:regulation of embryo sac egg cell differentiation"/>
    <property type="evidence" value="ECO:0000315"/>
    <property type="project" value="TAIR"/>
</dbReference>
<dbReference type="InterPro" id="IPR000690">
    <property type="entry name" value="Matrin/U1-C_Znf_C2H2"/>
</dbReference>
<dbReference type="InterPro" id="IPR051421">
    <property type="entry name" value="RNA_Proc_DNA_Dmg_Regulator"/>
</dbReference>
<dbReference type="InterPro" id="IPR025086">
    <property type="entry name" value="SDE2/SF3A3_SAP"/>
</dbReference>
<dbReference type="InterPro" id="IPR031774">
    <property type="entry name" value="SF3A3_dom"/>
</dbReference>
<dbReference type="InterPro" id="IPR024598">
    <property type="entry name" value="SF3a60/Prp9_C"/>
</dbReference>
<dbReference type="InterPro" id="IPR021966">
    <property type="entry name" value="SF3a60_bindingd"/>
</dbReference>
<dbReference type="PANTHER" id="PTHR12786:SF2">
    <property type="entry name" value="SPLICING FACTOR 3A SUBUNIT 3"/>
    <property type="match status" value="1"/>
</dbReference>
<dbReference type="PANTHER" id="PTHR12786">
    <property type="entry name" value="SPLICING FACTOR SF3A-RELATED"/>
    <property type="match status" value="1"/>
</dbReference>
<dbReference type="Pfam" id="PF13297">
    <property type="entry name" value="SDE2_2C"/>
    <property type="match status" value="1"/>
</dbReference>
<dbReference type="Pfam" id="PF16837">
    <property type="entry name" value="SF3A3"/>
    <property type="match status" value="1"/>
</dbReference>
<dbReference type="Pfam" id="PF12108">
    <property type="entry name" value="SF3a60_bindingd"/>
    <property type="match status" value="1"/>
</dbReference>
<dbReference type="Pfam" id="PF11931">
    <property type="entry name" value="SF3a60_Prp9_C"/>
    <property type="match status" value="1"/>
</dbReference>
<dbReference type="PROSITE" id="PS50171">
    <property type="entry name" value="ZF_MATRIN"/>
    <property type="match status" value="1"/>
</dbReference>
<comment type="function">
    <text evidence="3">Splicing factor homolog to SF3a60 that may be involved in pre-spliceosome formation. Is necessary for gametic cell fate determination.</text>
</comment>
<comment type="interaction">
    <interactant intactId="EBI-4475455">
        <id>Q9FG01</id>
    </interactant>
    <interactant intactId="EBI-15193049">
        <id>O23090</id>
        <label>BHLH14</label>
    </interactant>
    <organismsDiffer>false</organismsDiffer>
    <experiments>3</experiments>
</comment>
<comment type="interaction">
    <interactant intactId="EBI-4475455">
        <id>Q9FG01</id>
    </interactant>
    <interactant intactId="EBI-15194565">
        <id>Q8S3D2</id>
        <label>BHLH87</label>
    </interactant>
    <organismsDiffer>false</organismsDiffer>
    <experiments>3</experiments>
</comment>
<comment type="interaction">
    <interactant intactId="EBI-4475455">
        <id>Q9FG01</id>
    </interactant>
    <interactant intactId="EBI-15192173">
        <id>Q9SK91</id>
        <label>BHLH94</label>
    </interactant>
    <organismsDiffer>false</organismsDiffer>
    <experiments>3</experiments>
</comment>
<comment type="interaction">
    <interactant intactId="EBI-4475455">
        <id>Q9FG01</id>
    </interactant>
    <interactant intactId="EBI-1153797">
        <id>Q94KL5</id>
        <label>BLH4</label>
    </interactant>
    <organismsDiffer>false</organismsDiffer>
    <experiments>3</experiments>
</comment>
<comment type="interaction">
    <interactant intactId="EBI-4475455">
        <id>Q9FG01</id>
    </interactant>
    <interactant intactId="EBI-1998580">
        <id>Q8VZI9</id>
        <label>ENAP1</label>
    </interactant>
    <organismsDiffer>false</organismsDiffer>
    <experiments>4</experiments>
</comment>
<comment type="interaction">
    <interactant intactId="EBI-4475455">
        <id>Q9FG01</id>
    </interactant>
    <interactant intactId="EBI-15205450">
        <id>O80438</id>
        <label>MAK3</label>
    </interactant>
    <organismsDiffer>false</organismsDiffer>
    <experiments>3</experiments>
</comment>
<comment type="interaction">
    <interactant intactId="EBI-4475455">
        <id>Q9FG01</id>
    </interactant>
    <interactant intactId="EBI-3133327">
        <id>O82277</id>
        <label>TCP10</label>
    </interactant>
    <organismsDiffer>false</organismsDiffer>
    <experiments>3</experiments>
</comment>
<comment type="interaction">
    <interactant intactId="EBI-4475455">
        <id>Q9FG01</id>
    </interactant>
    <interactant intactId="EBI-4424563">
        <id>Q93Z00</id>
        <label>TCP14</label>
    </interactant>
    <organismsDiffer>false</organismsDiffer>
    <experiments>3</experiments>
</comment>
<comment type="interaction">
    <interactant intactId="EBI-4475455">
        <id>Q9FG01</id>
    </interactant>
    <interactant intactId="EBI-4426144">
        <id>Q9C9L2</id>
        <label>TCP15</label>
    </interactant>
    <organismsDiffer>false</organismsDiffer>
    <experiments>3</experiments>
</comment>
<comment type="interaction">
    <interactant intactId="EBI-4475455">
        <id>Q9FG01</id>
    </interactant>
    <interactant intactId="EBI-15192325">
        <id>Q8LPR5</id>
        <label>TCP4</label>
    </interactant>
    <organismsDiffer>false</organismsDiffer>
    <experiments>3</experiments>
</comment>
<comment type="interaction">
    <interactant intactId="EBI-4475455">
        <id>Q9FG01</id>
    </interactant>
    <interactant intactId="EBI-1806244">
        <id>O64722</id>
        <label>ZHD3</label>
    </interactant>
    <organismsDiffer>false</organismsDiffer>
    <experiments>3</experiments>
</comment>
<comment type="subcellular location">
    <subcellularLocation>
        <location evidence="1">Nucleus</location>
    </subcellularLocation>
</comment>
<comment type="tissue specificity">
    <text evidence="3">Expressed at moderate levels in all sporophytic tissues with strongest expression in gametophytes.</text>
</comment>
<comment type="similarity">
    <text evidence="5">Belongs to the SF3A3 family.</text>
</comment>
<evidence type="ECO:0000255" key="1">
    <source>
        <dbReference type="PROSITE-ProRule" id="PRU00130"/>
    </source>
</evidence>
<evidence type="ECO:0000256" key="2">
    <source>
        <dbReference type="SAM" id="MobiDB-lite"/>
    </source>
</evidence>
<evidence type="ECO:0000269" key="3">
    <source>
    </source>
</evidence>
<evidence type="ECO:0000303" key="4">
    <source>
    </source>
</evidence>
<evidence type="ECO:0000305" key="5"/>
<evidence type="ECO:0000312" key="6">
    <source>
        <dbReference type="Araport" id="AT5G06160"/>
    </source>
</evidence>
<evidence type="ECO:0000312" key="7">
    <source>
        <dbReference type="EMBL" id="BAB09681.1"/>
    </source>
</evidence>
<evidence type="ECO:0007744" key="8">
    <source>
    </source>
</evidence>
<evidence type="ECO:0007744" key="9">
    <source>
    </source>
</evidence>
<evidence type="ECO:0007744" key="10">
    <source>
    </source>
</evidence>
<gene>
    <name evidence="4" type="primary">ATO</name>
    <name evidence="6" type="ordered locus">At5g06160</name>
    <name evidence="7" type="ORF">MBL20.3</name>
</gene>
<accession>Q9FG01</accession>
<reference key="1">
    <citation type="submission" date="2000-06" db="EMBL/GenBank/DDBJ databases">
        <title>Structural analysis of Arabidopsis thaliana chromosome 5. XI.</title>
        <authorList>
            <person name="Kaneko T."/>
            <person name="Katoh T."/>
            <person name="Asamizu E."/>
            <person name="Sato S."/>
            <person name="Nakamura Y."/>
            <person name="Kotani H."/>
            <person name="Tabata S."/>
        </authorList>
    </citation>
    <scope>NUCLEOTIDE SEQUENCE [LARGE SCALE GENOMIC DNA]</scope>
    <source>
        <strain>cv. Columbia</strain>
    </source>
</reference>
<reference key="2">
    <citation type="journal article" date="2017" name="Plant J.">
        <title>Araport11: a complete reannotation of the Arabidopsis thaliana reference genome.</title>
        <authorList>
            <person name="Cheng C.Y."/>
            <person name="Krishnakumar V."/>
            <person name="Chan A.P."/>
            <person name="Thibaud-Nissen F."/>
            <person name="Schobel S."/>
            <person name="Town C.D."/>
        </authorList>
    </citation>
    <scope>GENOME REANNOTATION</scope>
    <source>
        <strain>cv. Columbia</strain>
    </source>
</reference>
<reference key="3">
    <citation type="journal article" date="2003" name="Science">
        <title>Empirical analysis of transcriptional activity in the Arabidopsis genome.</title>
        <authorList>
            <person name="Yamada K."/>
            <person name="Lim J."/>
            <person name="Dale J.M."/>
            <person name="Chen H."/>
            <person name="Shinn P."/>
            <person name="Palm C.J."/>
            <person name="Southwick A.M."/>
            <person name="Wu H.C."/>
            <person name="Kim C.J."/>
            <person name="Nguyen M."/>
            <person name="Pham P.K."/>
            <person name="Cheuk R.F."/>
            <person name="Karlin-Newmann G."/>
            <person name="Liu S.X."/>
            <person name="Lam B."/>
            <person name="Sakano H."/>
            <person name="Wu T."/>
            <person name="Yu G."/>
            <person name="Miranda M."/>
            <person name="Quach H.L."/>
            <person name="Tripp M."/>
            <person name="Chang C.H."/>
            <person name="Lee J.M."/>
            <person name="Toriumi M.J."/>
            <person name="Chan M.M."/>
            <person name="Tang C.C."/>
            <person name="Onodera C.S."/>
            <person name="Deng J.M."/>
            <person name="Akiyama K."/>
            <person name="Ansari Y."/>
            <person name="Arakawa T."/>
            <person name="Banh J."/>
            <person name="Banno F."/>
            <person name="Bowser L."/>
            <person name="Brooks S.Y."/>
            <person name="Carninci P."/>
            <person name="Chao Q."/>
            <person name="Choy N."/>
            <person name="Enju A."/>
            <person name="Goldsmith A.D."/>
            <person name="Gurjal M."/>
            <person name="Hansen N.F."/>
            <person name="Hayashizaki Y."/>
            <person name="Johnson-Hopson C."/>
            <person name="Hsuan V.W."/>
            <person name="Iida K."/>
            <person name="Karnes M."/>
            <person name="Khan S."/>
            <person name="Koesema E."/>
            <person name="Ishida J."/>
            <person name="Jiang P.X."/>
            <person name="Jones T."/>
            <person name="Kawai J."/>
            <person name="Kamiya A."/>
            <person name="Meyers C."/>
            <person name="Nakajima M."/>
            <person name="Narusaka M."/>
            <person name="Seki M."/>
            <person name="Sakurai T."/>
            <person name="Satou M."/>
            <person name="Tamse R."/>
            <person name="Vaysberg M."/>
            <person name="Wallender E.K."/>
            <person name="Wong C."/>
            <person name="Yamamura Y."/>
            <person name="Yuan S."/>
            <person name="Shinozaki K."/>
            <person name="Davis R.W."/>
            <person name="Theologis A."/>
            <person name="Ecker J.R."/>
        </authorList>
    </citation>
    <scope>NUCLEOTIDE SEQUENCE [LARGE SCALE MRNA]</scope>
    <source>
        <strain>cv. Columbia</strain>
    </source>
</reference>
<reference key="4">
    <citation type="journal article" date="2008" name="J. Proteome Res.">
        <title>Site-specific phosphorylation profiling of Arabidopsis proteins by mass spectrometry and peptide chip analysis.</title>
        <authorList>
            <person name="de la Fuente van Bentem S."/>
            <person name="Anrather D."/>
            <person name="Dohnal I."/>
            <person name="Roitinger E."/>
            <person name="Csaszar E."/>
            <person name="Joore J."/>
            <person name="Buijnink J."/>
            <person name="Carreri A."/>
            <person name="Forzani C."/>
            <person name="Lorkovic Z.J."/>
            <person name="Barta A."/>
            <person name="Lecourieux D."/>
            <person name="Verhounig A."/>
            <person name="Jonak C."/>
            <person name="Hirt H."/>
        </authorList>
    </citation>
    <scope>PHOSPHORYLATION [LARGE SCALE ANALYSIS] AT SER-373</scope>
    <scope>IDENTIFICATION BY MASS SPECTROMETRY [LARGE SCALE ANALYSIS]</scope>
    <source>
        <tissue>Root</tissue>
    </source>
</reference>
<reference key="5">
    <citation type="journal article" date="2008" name="Plant J.">
        <title>CLO/GFA1 and ATO are novel regulators of gametic cell fate in plants.</title>
        <authorList>
            <person name="Moll C."/>
            <person name="von Lyncker L."/>
            <person name="Zimmermann S."/>
            <person name="Kaegi C."/>
            <person name="Baumann N."/>
            <person name="Twell D."/>
            <person name="Grossniklaus U."/>
            <person name="Gross-Hardt R."/>
        </authorList>
    </citation>
    <scope>FUNCTION</scope>
    <scope>TISSUE SPECIFICITY</scope>
    <scope>MUTAGENESIS OF CYS-411</scope>
</reference>
<reference key="6">
    <citation type="journal article" date="2009" name="J. Proteomics">
        <title>Phosphoproteomic analysis of nuclei-enriched fractions from Arabidopsis thaliana.</title>
        <authorList>
            <person name="Jones A.M.E."/>
            <person name="MacLean D."/>
            <person name="Studholme D.J."/>
            <person name="Serna-Sanz A."/>
            <person name="Andreasson E."/>
            <person name="Rathjen J.P."/>
            <person name="Peck S.C."/>
        </authorList>
    </citation>
    <scope>PHOSPHORYLATION [LARGE SCALE ANALYSIS] AT SER-373</scope>
    <scope>IDENTIFICATION BY MASS SPECTROMETRY [LARGE SCALE ANALYSIS]</scope>
    <source>
        <strain>cv. Columbia</strain>
    </source>
</reference>
<reference key="7">
    <citation type="journal article" date="2012" name="Mol. Cell. Proteomics">
        <title>Comparative large-scale characterisation of plant vs. mammal proteins reveals similar and idiosyncratic N-alpha acetylation features.</title>
        <authorList>
            <person name="Bienvenut W.V."/>
            <person name="Sumpton D."/>
            <person name="Martinez A."/>
            <person name="Lilla S."/>
            <person name="Espagne C."/>
            <person name="Meinnel T."/>
            <person name="Giglione C."/>
        </authorList>
    </citation>
    <scope>ACETYLATION [LARGE SCALE ANALYSIS] AT SER-2</scope>
    <scope>CLEAVAGE OF INITIATOR METHIONINE [LARGE SCALE ANALYSIS]</scope>
    <scope>IDENTIFICATION BY MASS SPECTROMETRY [LARGE SCALE ANALYSIS]</scope>
</reference>
<proteinExistence type="evidence at protein level"/>